<gene>
    <name evidence="1" type="primary">rpmB</name>
    <name type="ordered locus">RC1_3140</name>
</gene>
<comment type="similarity">
    <text evidence="1">Belongs to the bacterial ribosomal protein bL28 family.</text>
</comment>
<sequence length="99" mass="10959">MSRKCAVTGKGVQTGNNVSHANNKSRRRWLPNLQETSLLSDTLGRMVRLRLSTNGIRTIEHKGGLDAALLDIPDARLNQDARRVKKQIQKAIEAKKATA</sequence>
<keyword id="KW-1185">Reference proteome</keyword>
<keyword id="KW-0687">Ribonucleoprotein</keyword>
<keyword id="KW-0689">Ribosomal protein</keyword>
<reference key="1">
    <citation type="submission" date="2007-03" db="EMBL/GenBank/DDBJ databases">
        <title>Genome sequence of Rhodospirillum centenum.</title>
        <authorList>
            <person name="Touchman J.W."/>
            <person name="Bauer C."/>
            <person name="Blankenship R.E."/>
        </authorList>
    </citation>
    <scope>NUCLEOTIDE SEQUENCE [LARGE SCALE GENOMIC DNA]</scope>
    <source>
        <strain>ATCC 51521 / SW</strain>
    </source>
</reference>
<organism>
    <name type="scientific">Rhodospirillum centenum (strain ATCC 51521 / SW)</name>
    <dbReference type="NCBI Taxonomy" id="414684"/>
    <lineage>
        <taxon>Bacteria</taxon>
        <taxon>Pseudomonadati</taxon>
        <taxon>Pseudomonadota</taxon>
        <taxon>Alphaproteobacteria</taxon>
        <taxon>Rhodospirillales</taxon>
        <taxon>Rhodospirillaceae</taxon>
        <taxon>Rhodospirillum</taxon>
    </lineage>
</organism>
<accession>B6IW31</accession>
<feature type="chain" id="PRO_1000121678" description="Large ribosomal subunit protein bL28">
    <location>
        <begin position="1"/>
        <end position="99"/>
    </location>
</feature>
<feature type="region of interest" description="Disordered" evidence="2">
    <location>
        <begin position="1"/>
        <end position="25"/>
    </location>
</feature>
<feature type="compositionally biased region" description="Polar residues" evidence="2">
    <location>
        <begin position="11"/>
        <end position="22"/>
    </location>
</feature>
<protein>
    <recommendedName>
        <fullName evidence="1">Large ribosomal subunit protein bL28</fullName>
    </recommendedName>
    <alternativeName>
        <fullName evidence="3">50S ribosomal protein L28</fullName>
    </alternativeName>
</protein>
<dbReference type="EMBL" id="CP000613">
    <property type="protein sequence ID" value="ACJ00505.1"/>
    <property type="molecule type" value="Genomic_DNA"/>
</dbReference>
<dbReference type="RefSeq" id="WP_012568284.1">
    <property type="nucleotide sequence ID" value="NC_011420.2"/>
</dbReference>
<dbReference type="SMR" id="B6IW31"/>
<dbReference type="STRING" id="414684.RC1_3140"/>
<dbReference type="KEGG" id="rce:RC1_3140"/>
<dbReference type="eggNOG" id="COG0227">
    <property type="taxonomic scope" value="Bacteria"/>
</dbReference>
<dbReference type="HOGENOM" id="CLU_064548_4_2_5"/>
<dbReference type="OrthoDB" id="9805609at2"/>
<dbReference type="Proteomes" id="UP000001591">
    <property type="component" value="Chromosome"/>
</dbReference>
<dbReference type="GO" id="GO:1990904">
    <property type="term" value="C:ribonucleoprotein complex"/>
    <property type="evidence" value="ECO:0007669"/>
    <property type="project" value="UniProtKB-KW"/>
</dbReference>
<dbReference type="GO" id="GO:0005840">
    <property type="term" value="C:ribosome"/>
    <property type="evidence" value="ECO:0007669"/>
    <property type="project" value="UniProtKB-KW"/>
</dbReference>
<dbReference type="GO" id="GO:0003735">
    <property type="term" value="F:structural constituent of ribosome"/>
    <property type="evidence" value="ECO:0007669"/>
    <property type="project" value="InterPro"/>
</dbReference>
<dbReference type="GO" id="GO:0006412">
    <property type="term" value="P:translation"/>
    <property type="evidence" value="ECO:0007669"/>
    <property type="project" value="UniProtKB-UniRule"/>
</dbReference>
<dbReference type="Gene3D" id="2.30.170.40">
    <property type="entry name" value="Ribosomal protein L28/L24"/>
    <property type="match status" value="1"/>
</dbReference>
<dbReference type="HAMAP" id="MF_00373">
    <property type="entry name" value="Ribosomal_bL28"/>
    <property type="match status" value="1"/>
</dbReference>
<dbReference type="InterPro" id="IPR026569">
    <property type="entry name" value="Ribosomal_bL28"/>
</dbReference>
<dbReference type="InterPro" id="IPR034704">
    <property type="entry name" value="Ribosomal_bL28/bL31-like_sf"/>
</dbReference>
<dbReference type="InterPro" id="IPR001383">
    <property type="entry name" value="Ribosomal_bL28_bact-type"/>
</dbReference>
<dbReference type="InterPro" id="IPR037147">
    <property type="entry name" value="Ribosomal_bL28_sf"/>
</dbReference>
<dbReference type="NCBIfam" id="TIGR00009">
    <property type="entry name" value="L28"/>
    <property type="match status" value="1"/>
</dbReference>
<dbReference type="PANTHER" id="PTHR13528">
    <property type="entry name" value="39S RIBOSOMAL PROTEIN L28, MITOCHONDRIAL"/>
    <property type="match status" value="1"/>
</dbReference>
<dbReference type="PANTHER" id="PTHR13528:SF2">
    <property type="entry name" value="LARGE RIBOSOMAL SUBUNIT PROTEIN BL28M"/>
    <property type="match status" value="1"/>
</dbReference>
<dbReference type="Pfam" id="PF00830">
    <property type="entry name" value="Ribosomal_L28"/>
    <property type="match status" value="1"/>
</dbReference>
<dbReference type="SUPFAM" id="SSF143800">
    <property type="entry name" value="L28p-like"/>
    <property type="match status" value="1"/>
</dbReference>
<name>RL28_RHOCS</name>
<evidence type="ECO:0000255" key="1">
    <source>
        <dbReference type="HAMAP-Rule" id="MF_00373"/>
    </source>
</evidence>
<evidence type="ECO:0000256" key="2">
    <source>
        <dbReference type="SAM" id="MobiDB-lite"/>
    </source>
</evidence>
<evidence type="ECO:0000305" key="3"/>
<proteinExistence type="inferred from homology"/>